<sequence length="67" mass="7522">MSYTLKNTTPMSVTMNYLHHHCVRIGEVPIHDCHIFLLLIHNNVVTVNITSDSIALVVTSEVSHNLP</sequence>
<dbReference type="EMBL" id="AJ854042">
    <property type="protein sequence ID" value="CAH69410.1"/>
    <property type="molecule type" value="Genomic_DNA"/>
</dbReference>
<dbReference type="RefSeq" id="YP_001496948.1">
    <property type="nucleotide sequence ID" value="NC_009884.1"/>
</dbReference>
<dbReference type="KEGG" id="vg:5656065"/>
<dbReference type="Proteomes" id="UP000006364">
    <property type="component" value="Genome"/>
</dbReference>
<protein>
    <recommendedName>
        <fullName>Uncharacterized protein ORF67a</fullName>
    </recommendedName>
</protein>
<accession>Q573E6</accession>
<organismHost>
    <name type="scientific">Acidianus sp. F28</name>
    <dbReference type="NCBI Taxonomy" id="315458"/>
</organismHost>
<reference key="1">
    <citation type="journal article" date="2005" name="J. Bacteriol.">
        <title>Structure and genome organization of AFV2, a novel archaeal lipothrixvirus with unusual terminal and core structures.</title>
        <authorList>
            <person name="Haring M."/>
            <person name="Vestergaard G."/>
            <person name="Brugger K."/>
            <person name="Rachel R."/>
            <person name="Garrett R.A."/>
            <person name="Prangishvili D."/>
        </authorList>
    </citation>
    <scope>NUCLEOTIDE SEQUENCE [GENOMIC DNA]</scope>
</reference>
<proteinExistence type="predicted"/>
<gene>
    <name type="ORF">ORF67a</name>
</gene>
<organism>
    <name type="scientific">Acidianus filamentous virus 2 (isolate Italy/Pozzuoli)</name>
    <name type="common">AFV-2</name>
    <dbReference type="NCBI Taxonomy" id="654910"/>
    <lineage>
        <taxon>Viruses</taxon>
        <taxon>Adnaviria</taxon>
        <taxon>Zilligvirae</taxon>
        <taxon>Taleaviricota</taxon>
        <taxon>Tokiviricetes</taxon>
        <taxon>Ligamenvirales</taxon>
        <taxon>Lipothrixviridae</taxon>
        <taxon>Deltalipothrixvirus</taxon>
        <taxon>Acidianus filamentous virus 2</taxon>
    </lineage>
</organism>
<name>Y067A_AFV2P</name>
<feature type="chain" id="PRO_0000384490" description="Uncharacterized protein ORF67a">
    <location>
        <begin position="1"/>
        <end position="67"/>
    </location>
</feature>
<keyword id="KW-1185">Reference proteome</keyword>